<comment type="function">
    <text evidence="1">Peptide chain release factor 1 directs the termination of translation in response to the peptide chain termination codons UAG and UAA.</text>
</comment>
<comment type="subcellular location">
    <subcellularLocation>
        <location evidence="1">Cytoplasm</location>
    </subcellularLocation>
</comment>
<comment type="PTM">
    <text evidence="1">Methylated by PrmC. Methylation increases the termination efficiency of RF1.</text>
</comment>
<comment type="similarity">
    <text evidence="1">Belongs to the prokaryotic/mitochondrial release factor family.</text>
</comment>
<proteinExistence type="inferred from homology"/>
<organism>
    <name type="scientific">Clostridium beijerinckii (strain ATCC 51743 / NCIMB 8052)</name>
    <name type="common">Clostridium acetobutylicum</name>
    <dbReference type="NCBI Taxonomy" id="290402"/>
    <lineage>
        <taxon>Bacteria</taxon>
        <taxon>Bacillati</taxon>
        <taxon>Bacillota</taxon>
        <taxon>Clostridia</taxon>
        <taxon>Eubacteriales</taxon>
        <taxon>Clostridiaceae</taxon>
        <taxon>Clostridium</taxon>
    </lineage>
</organism>
<accession>A6LQG2</accession>
<evidence type="ECO:0000255" key="1">
    <source>
        <dbReference type="HAMAP-Rule" id="MF_00093"/>
    </source>
</evidence>
<evidence type="ECO:0000256" key="2">
    <source>
        <dbReference type="SAM" id="MobiDB-lite"/>
    </source>
</evidence>
<sequence length="360" mass="40993">MLLDKLEFIENKYDELSVKISDPSIMQNQNEWRKLCKEHADLEVIVNSYREYKKVVEDLKANKEMLSGESDKEMREMLNEEITDLTNREEQLETEIQILLLPKDPNDDKNVFVEIRGGAGGEEAALFAYNLFRMYTRYAETQRWGVEIMSLNETDLGGFKEVVFMIKGNGAYSKLKYESGVHRVQRVPDTESSGRIHTSTATVAVLPEVDDVEIEVADKDVRIDVFRASGNGGQCVNTTDSAVRITHLPTGLVVSCQDEKSQLKNKEKAMKVLKSRLYEQAERERAQGIAEDRKSQVGTGDRSERIRTYNYPQGRITDHRIGLTLYKLDTFLGGDIDEMINALITADQAEKMKLMGNTQM</sequence>
<name>RF1_CLOB8</name>
<feature type="chain" id="PRO_1000075488" description="Peptide chain release factor 1">
    <location>
        <begin position="1"/>
        <end position="360"/>
    </location>
</feature>
<feature type="region of interest" description="Disordered" evidence="2">
    <location>
        <begin position="285"/>
        <end position="305"/>
    </location>
</feature>
<feature type="modified residue" description="N5-methylglutamine" evidence="1">
    <location>
        <position position="234"/>
    </location>
</feature>
<dbReference type="EMBL" id="CP000721">
    <property type="protein sequence ID" value="ABR32592.1"/>
    <property type="molecule type" value="Genomic_DNA"/>
</dbReference>
<dbReference type="RefSeq" id="WP_011967753.1">
    <property type="nucleotide sequence ID" value="NC_009617.1"/>
</dbReference>
<dbReference type="SMR" id="A6LQG2"/>
<dbReference type="GeneID" id="66343315"/>
<dbReference type="KEGG" id="cbe:Cbei_0404"/>
<dbReference type="eggNOG" id="COG0216">
    <property type="taxonomic scope" value="Bacteria"/>
</dbReference>
<dbReference type="HOGENOM" id="CLU_036856_0_1_9"/>
<dbReference type="Proteomes" id="UP000000565">
    <property type="component" value="Chromosome"/>
</dbReference>
<dbReference type="GO" id="GO:0005737">
    <property type="term" value="C:cytoplasm"/>
    <property type="evidence" value="ECO:0007669"/>
    <property type="project" value="UniProtKB-SubCell"/>
</dbReference>
<dbReference type="GO" id="GO:0016149">
    <property type="term" value="F:translation release factor activity, codon specific"/>
    <property type="evidence" value="ECO:0007669"/>
    <property type="project" value="UniProtKB-UniRule"/>
</dbReference>
<dbReference type="FunFam" id="3.30.160.20:FF:000004">
    <property type="entry name" value="Peptide chain release factor 1"/>
    <property type="match status" value="1"/>
</dbReference>
<dbReference type="FunFam" id="3.30.70.1660:FF:000002">
    <property type="entry name" value="Peptide chain release factor 1"/>
    <property type="match status" value="1"/>
</dbReference>
<dbReference type="FunFam" id="3.30.70.1660:FF:000004">
    <property type="entry name" value="Peptide chain release factor 1"/>
    <property type="match status" value="1"/>
</dbReference>
<dbReference type="Gene3D" id="3.30.160.20">
    <property type="match status" value="1"/>
</dbReference>
<dbReference type="Gene3D" id="3.30.70.1660">
    <property type="match status" value="1"/>
</dbReference>
<dbReference type="Gene3D" id="6.10.140.1950">
    <property type="match status" value="1"/>
</dbReference>
<dbReference type="HAMAP" id="MF_00093">
    <property type="entry name" value="Rel_fac_1"/>
    <property type="match status" value="1"/>
</dbReference>
<dbReference type="InterPro" id="IPR005139">
    <property type="entry name" value="PCRF"/>
</dbReference>
<dbReference type="InterPro" id="IPR000352">
    <property type="entry name" value="Pep_chain_release_fac_I"/>
</dbReference>
<dbReference type="InterPro" id="IPR045853">
    <property type="entry name" value="Pep_chain_release_fac_I_sf"/>
</dbReference>
<dbReference type="InterPro" id="IPR050057">
    <property type="entry name" value="Prokaryotic/Mito_RF"/>
</dbReference>
<dbReference type="InterPro" id="IPR004373">
    <property type="entry name" value="RF-1"/>
</dbReference>
<dbReference type="NCBIfam" id="TIGR00019">
    <property type="entry name" value="prfA"/>
    <property type="match status" value="1"/>
</dbReference>
<dbReference type="NCBIfam" id="NF001859">
    <property type="entry name" value="PRK00591.1"/>
    <property type="match status" value="1"/>
</dbReference>
<dbReference type="PANTHER" id="PTHR43804">
    <property type="entry name" value="LD18447P"/>
    <property type="match status" value="1"/>
</dbReference>
<dbReference type="PANTHER" id="PTHR43804:SF7">
    <property type="entry name" value="LD18447P"/>
    <property type="match status" value="1"/>
</dbReference>
<dbReference type="Pfam" id="PF03462">
    <property type="entry name" value="PCRF"/>
    <property type="match status" value="1"/>
</dbReference>
<dbReference type="Pfam" id="PF00472">
    <property type="entry name" value="RF-1"/>
    <property type="match status" value="1"/>
</dbReference>
<dbReference type="SMART" id="SM00937">
    <property type="entry name" value="PCRF"/>
    <property type="match status" value="1"/>
</dbReference>
<dbReference type="SUPFAM" id="SSF75620">
    <property type="entry name" value="Release factor"/>
    <property type="match status" value="1"/>
</dbReference>
<dbReference type="PROSITE" id="PS00745">
    <property type="entry name" value="RF_PROK_I"/>
    <property type="match status" value="1"/>
</dbReference>
<protein>
    <recommendedName>
        <fullName evidence="1">Peptide chain release factor 1</fullName>
        <shortName evidence="1">RF-1</shortName>
    </recommendedName>
</protein>
<keyword id="KW-0963">Cytoplasm</keyword>
<keyword id="KW-0488">Methylation</keyword>
<keyword id="KW-0648">Protein biosynthesis</keyword>
<gene>
    <name evidence="1" type="primary">prfA</name>
    <name type="ordered locus">Cbei_0404</name>
</gene>
<reference key="1">
    <citation type="submission" date="2007-06" db="EMBL/GenBank/DDBJ databases">
        <title>Complete sequence of Clostridium beijerinckii NCIMB 8052.</title>
        <authorList>
            <consortium name="US DOE Joint Genome Institute"/>
            <person name="Copeland A."/>
            <person name="Lucas S."/>
            <person name="Lapidus A."/>
            <person name="Barry K."/>
            <person name="Detter J.C."/>
            <person name="Glavina del Rio T."/>
            <person name="Hammon N."/>
            <person name="Israni S."/>
            <person name="Dalin E."/>
            <person name="Tice H."/>
            <person name="Pitluck S."/>
            <person name="Sims D."/>
            <person name="Brettin T."/>
            <person name="Bruce D."/>
            <person name="Tapia R."/>
            <person name="Brainard J."/>
            <person name="Schmutz J."/>
            <person name="Larimer F."/>
            <person name="Land M."/>
            <person name="Hauser L."/>
            <person name="Kyrpides N."/>
            <person name="Mikhailova N."/>
            <person name="Bennet G."/>
            <person name="Cann I."/>
            <person name="Chen J.-S."/>
            <person name="Contreras A.L."/>
            <person name="Jones D."/>
            <person name="Kashket E."/>
            <person name="Mitchell W."/>
            <person name="Stoddard S."/>
            <person name="Schwarz W."/>
            <person name="Qureshi N."/>
            <person name="Young M."/>
            <person name="Shi Z."/>
            <person name="Ezeji T."/>
            <person name="White B."/>
            <person name="Blaschek H."/>
            <person name="Richardson P."/>
        </authorList>
    </citation>
    <scope>NUCLEOTIDE SEQUENCE [LARGE SCALE GENOMIC DNA]</scope>
    <source>
        <strain>ATCC 51743 / NCIMB 8052</strain>
    </source>
</reference>